<evidence type="ECO:0000250" key="1"/>
<evidence type="ECO:0000255" key="2">
    <source>
        <dbReference type="PROSITE-ProRule" id="PRU01330"/>
    </source>
</evidence>
<evidence type="ECO:0000255" key="3">
    <source>
        <dbReference type="PROSITE-ProRule" id="PRU01331"/>
    </source>
</evidence>
<evidence type="ECO:0000305" key="4"/>
<keyword id="KW-0067">ATP-binding</keyword>
<keyword id="KW-0963">Cytoplasm</keyword>
<keyword id="KW-0436">Ligase</keyword>
<keyword id="KW-0547">Nucleotide-binding</keyword>
<keyword id="KW-1185">Reference proteome</keyword>
<accession>Q96V52</accession>
<accession>C8V4Q5</accession>
<accession>Q5B5M1</accession>
<dbReference type="EC" id="6.3.1.2"/>
<dbReference type="EMBL" id="AF333968">
    <property type="protein sequence ID" value="AAK70354.1"/>
    <property type="status" value="ALT_SEQ"/>
    <property type="molecule type" value="Genomic_DNA"/>
</dbReference>
<dbReference type="EMBL" id="AACD01000067">
    <property type="protein sequence ID" value="EAA59420.1"/>
    <property type="status" value="ALT_SEQ"/>
    <property type="molecule type" value="Genomic_DNA"/>
</dbReference>
<dbReference type="EMBL" id="BN001302">
    <property type="protein sequence ID" value="CBF74586.1"/>
    <property type="molecule type" value="Genomic_DNA"/>
</dbReference>
<dbReference type="RefSeq" id="XP_661763.1">
    <property type="nucleotide sequence ID" value="XM_656671.1"/>
</dbReference>
<dbReference type="SMR" id="Q96V52"/>
<dbReference type="FunCoup" id="Q96V52">
    <property type="interactions" value="739"/>
</dbReference>
<dbReference type="STRING" id="227321.Q96V52"/>
<dbReference type="EnsemblFungi" id="CBF74586">
    <property type="protein sequence ID" value="CBF74586"/>
    <property type="gene ID" value="ANIA_04159"/>
</dbReference>
<dbReference type="KEGG" id="ani:ANIA_04159"/>
<dbReference type="eggNOG" id="KOG0683">
    <property type="taxonomic scope" value="Eukaryota"/>
</dbReference>
<dbReference type="HOGENOM" id="CLU_036762_1_1_1"/>
<dbReference type="InParanoid" id="Q96V52"/>
<dbReference type="OMA" id="DRRPNAN"/>
<dbReference type="OrthoDB" id="1936100at2759"/>
<dbReference type="Proteomes" id="UP000000560">
    <property type="component" value="Chromosome II"/>
</dbReference>
<dbReference type="GO" id="GO:0005737">
    <property type="term" value="C:cytoplasm"/>
    <property type="evidence" value="ECO:0000318"/>
    <property type="project" value="GO_Central"/>
</dbReference>
<dbReference type="GO" id="GO:0005524">
    <property type="term" value="F:ATP binding"/>
    <property type="evidence" value="ECO:0007669"/>
    <property type="project" value="UniProtKB-KW"/>
</dbReference>
<dbReference type="GO" id="GO:0004356">
    <property type="term" value="F:glutamine synthetase activity"/>
    <property type="evidence" value="ECO:0000318"/>
    <property type="project" value="GO_Central"/>
</dbReference>
<dbReference type="GO" id="GO:0006542">
    <property type="term" value="P:glutamine biosynthetic process"/>
    <property type="evidence" value="ECO:0000318"/>
    <property type="project" value="GO_Central"/>
</dbReference>
<dbReference type="FunFam" id="3.10.20.70:FF:000004">
    <property type="entry name" value="Glutamine synthetase"/>
    <property type="match status" value="1"/>
</dbReference>
<dbReference type="FunFam" id="3.30.590.10:FF:000004">
    <property type="entry name" value="Glutamine synthetase"/>
    <property type="match status" value="1"/>
</dbReference>
<dbReference type="Gene3D" id="3.10.20.70">
    <property type="entry name" value="Glutamine synthetase, N-terminal domain"/>
    <property type="match status" value="1"/>
</dbReference>
<dbReference type="Gene3D" id="3.30.590.10">
    <property type="entry name" value="Glutamine synthetase/guanido kinase, catalytic domain"/>
    <property type="match status" value="1"/>
</dbReference>
<dbReference type="InterPro" id="IPR008147">
    <property type="entry name" value="Gln_synt_N"/>
</dbReference>
<dbReference type="InterPro" id="IPR036651">
    <property type="entry name" value="Gln_synt_N_sf"/>
</dbReference>
<dbReference type="InterPro" id="IPR014746">
    <property type="entry name" value="Gln_synth/guanido_kin_cat_dom"/>
</dbReference>
<dbReference type="InterPro" id="IPR008146">
    <property type="entry name" value="Gln_synth_cat_dom"/>
</dbReference>
<dbReference type="InterPro" id="IPR027303">
    <property type="entry name" value="Gln_synth_gly_rich_site"/>
</dbReference>
<dbReference type="InterPro" id="IPR027302">
    <property type="entry name" value="Gln_synth_N_conserv_site"/>
</dbReference>
<dbReference type="InterPro" id="IPR050292">
    <property type="entry name" value="Glutamine_Synthetase"/>
</dbReference>
<dbReference type="PANTHER" id="PTHR20852">
    <property type="entry name" value="GLUTAMINE SYNTHETASE"/>
    <property type="match status" value="1"/>
</dbReference>
<dbReference type="PANTHER" id="PTHR20852:SF57">
    <property type="entry name" value="GLUTAMINE SYNTHETASE 2 CYTOPLASMIC"/>
    <property type="match status" value="1"/>
</dbReference>
<dbReference type="Pfam" id="PF00120">
    <property type="entry name" value="Gln-synt_C"/>
    <property type="match status" value="1"/>
</dbReference>
<dbReference type="Pfam" id="PF03951">
    <property type="entry name" value="Gln-synt_N"/>
    <property type="match status" value="1"/>
</dbReference>
<dbReference type="SMART" id="SM01230">
    <property type="entry name" value="Gln-synt_C"/>
    <property type="match status" value="1"/>
</dbReference>
<dbReference type="SUPFAM" id="SSF54368">
    <property type="entry name" value="Glutamine synthetase, N-terminal domain"/>
    <property type="match status" value="1"/>
</dbReference>
<dbReference type="SUPFAM" id="SSF55931">
    <property type="entry name" value="Glutamine synthetase/guanido kinase"/>
    <property type="match status" value="1"/>
</dbReference>
<dbReference type="PROSITE" id="PS00180">
    <property type="entry name" value="GLNA_1"/>
    <property type="match status" value="1"/>
</dbReference>
<dbReference type="PROSITE" id="PS00181">
    <property type="entry name" value="GLNA_ATP"/>
    <property type="match status" value="1"/>
</dbReference>
<dbReference type="PROSITE" id="PS51986">
    <property type="entry name" value="GS_BETA_GRASP"/>
    <property type="match status" value="1"/>
</dbReference>
<dbReference type="PROSITE" id="PS51987">
    <property type="entry name" value="GS_CATALYTIC"/>
    <property type="match status" value="1"/>
</dbReference>
<sequence length="357" mass="39714">MTDSTNVSNTENLMKYMSLDQRGSVMAEYIWIDAHGGTRSKTKTLSKAPSSVDELPEWNFDGSSTAQAPGDNSDVYLRPVAMYPDPFRRGDNILVLCETWDSDGSPNKFNYRHDCARLMETHAKEEFWFGLEQEYTLLGPDGWPYGWPKGGFPGAQGPYYCGVGTGKVYCRDIVEAHYRACLYAGVKISGINAEVMPSQWEYQVGPCHGIEMGDHLWISRFLLHRVAEEFGVKISFDPKPIKGDWNGAGLHTNVSTTSTRAEGGIKAIESYMKKLEARHVEHIAVYGEGNEERLTGRHETGNIDKFSYGVADRGGSIRIPRQVAKDGKGYFEDRRPASNADPYQITGIIAETLCGGL</sequence>
<comment type="catalytic activity">
    <reaction>
        <text>L-glutamate + NH4(+) + ATP = L-glutamine + ADP + phosphate + H(+)</text>
        <dbReference type="Rhea" id="RHEA:16169"/>
        <dbReference type="ChEBI" id="CHEBI:15378"/>
        <dbReference type="ChEBI" id="CHEBI:28938"/>
        <dbReference type="ChEBI" id="CHEBI:29985"/>
        <dbReference type="ChEBI" id="CHEBI:30616"/>
        <dbReference type="ChEBI" id="CHEBI:43474"/>
        <dbReference type="ChEBI" id="CHEBI:58359"/>
        <dbReference type="ChEBI" id="CHEBI:456216"/>
        <dbReference type="EC" id="6.3.1.2"/>
    </reaction>
</comment>
<comment type="subunit">
    <text evidence="1">Homooctamer.</text>
</comment>
<comment type="subcellular location">
    <subcellularLocation>
        <location evidence="1">Cytoplasm</location>
    </subcellularLocation>
</comment>
<comment type="similarity">
    <text evidence="4">Belongs to the glutamine synthetase family.</text>
</comment>
<comment type="sequence caution" evidence="4">
    <conflict type="erroneous gene model prediction">
        <sequence resource="EMBL-CDS" id="AAK70354"/>
    </conflict>
</comment>
<comment type="sequence caution" evidence="4">
    <conflict type="erroneous gene model prediction">
        <sequence resource="EMBL-CDS" id="EAA59420"/>
    </conflict>
</comment>
<gene>
    <name type="primary">glnA</name>
    <name type="ORF">AN4159</name>
</gene>
<protein>
    <recommendedName>
        <fullName>Glutamine synthetase</fullName>
        <shortName>GS</shortName>
        <ecNumber>6.3.1.2</ecNumber>
    </recommendedName>
    <alternativeName>
        <fullName>Glutamate--ammonia ligase</fullName>
    </alternativeName>
</protein>
<proteinExistence type="inferred from homology"/>
<reference key="1">
    <citation type="journal article" date="2001" name="J. Bacteriol.">
        <title>Role of glutamine synthetase in nitrogen metabolite repression in Aspergillus nidulans.</title>
        <authorList>
            <person name="Margelis S."/>
            <person name="D'Souza C."/>
            <person name="Small A.J."/>
            <person name="Hynes M.J."/>
            <person name="Adams T.H."/>
            <person name="Davis M.A."/>
        </authorList>
    </citation>
    <scope>NUCLEOTIDE SEQUENCE [GENOMIC DNA]</scope>
</reference>
<reference key="2">
    <citation type="journal article" date="2005" name="Nature">
        <title>Sequencing of Aspergillus nidulans and comparative analysis with A. fumigatus and A. oryzae.</title>
        <authorList>
            <person name="Galagan J.E."/>
            <person name="Calvo S.E."/>
            <person name="Cuomo C."/>
            <person name="Ma L.-J."/>
            <person name="Wortman J.R."/>
            <person name="Batzoglou S."/>
            <person name="Lee S.-I."/>
            <person name="Bastuerkmen M."/>
            <person name="Spevak C.C."/>
            <person name="Clutterbuck J."/>
            <person name="Kapitonov V."/>
            <person name="Jurka J."/>
            <person name="Scazzocchio C."/>
            <person name="Farman M.L."/>
            <person name="Butler J."/>
            <person name="Purcell S."/>
            <person name="Harris S."/>
            <person name="Braus G.H."/>
            <person name="Draht O."/>
            <person name="Busch S."/>
            <person name="D'Enfert C."/>
            <person name="Bouchier C."/>
            <person name="Goldman G.H."/>
            <person name="Bell-Pedersen D."/>
            <person name="Griffiths-Jones S."/>
            <person name="Doonan J.H."/>
            <person name="Yu J."/>
            <person name="Vienken K."/>
            <person name="Pain A."/>
            <person name="Freitag M."/>
            <person name="Selker E.U."/>
            <person name="Archer D.B."/>
            <person name="Penalva M.A."/>
            <person name="Oakley B.R."/>
            <person name="Momany M."/>
            <person name="Tanaka T."/>
            <person name="Kumagai T."/>
            <person name="Asai K."/>
            <person name="Machida M."/>
            <person name="Nierman W.C."/>
            <person name="Denning D.W."/>
            <person name="Caddick M.X."/>
            <person name="Hynes M."/>
            <person name="Paoletti M."/>
            <person name="Fischer R."/>
            <person name="Miller B.L."/>
            <person name="Dyer P.S."/>
            <person name="Sachs M.S."/>
            <person name="Osmani S.A."/>
            <person name="Birren B.W."/>
        </authorList>
    </citation>
    <scope>NUCLEOTIDE SEQUENCE [LARGE SCALE GENOMIC DNA]</scope>
    <source>
        <strain>FGSC A4 / ATCC 38163 / CBS 112.46 / NRRL 194 / M139</strain>
    </source>
</reference>
<reference key="3">
    <citation type="journal article" date="2009" name="Fungal Genet. Biol.">
        <title>The 2008 update of the Aspergillus nidulans genome annotation: a community effort.</title>
        <authorList>
            <person name="Wortman J.R."/>
            <person name="Gilsenan J.M."/>
            <person name="Joardar V."/>
            <person name="Deegan J."/>
            <person name="Clutterbuck J."/>
            <person name="Andersen M.R."/>
            <person name="Archer D."/>
            <person name="Bencina M."/>
            <person name="Braus G."/>
            <person name="Coutinho P."/>
            <person name="von Dohren H."/>
            <person name="Doonan J."/>
            <person name="Driessen A.J."/>
            <person name="Durek P."/>
            <person name="Espeso E."/>
            <person name="Fekete E."/>
            <person name="Flipphi M."/>
            <person name="Estrada C.G."/>
            <person name="Geysens S."/>
            <person name="Goldman G."/>
            <person name="de Groot P.W."/>
            <person name="Hansen K."/>
            <person name="Harris S.D."/>
            <person name="Heinekamp T."/>
            <person name="Helmstaedt K."/>
            <person name="Henrissat B."/>
            <person name="Hofmann G."/>
            <person name="Homan T."/>
            <person name="Horio T."/>
            <person name="Horiuchi H."/>
            <person name="James S."/>
            <person name="Jones M."/>
            <person name="Karaffa L."/>
            <person name="Karanyi Z."/>
            <person name="Kato M."/>
            <person name="Keller N."/>
            <person name="Kelly D.E."/>
            <person name="Kiel J.A."/>
            <person name="Kim J.M."/>
            <person name="van der Klei I.J."/>
            <person name="Klis F.M."/>
            <person name="Kovalchuk A."/>
            <person name="Krasevec N."/>
            <person name="Kubicek C.P."/>
            <person name="Liu B."/>
            <person name="Maccabe A."/>
            <person name="Meyer V."/>
            <person name="Mirabito P."/>
            <person name="Miskei M."/>
            <person name="Mos M."/>
            <person name="Mullins J."/>
            <person name="Nelson D.R."/>
            <person name="Nielsen J."/>
            <person name="Oakley B.R."/>
            <person name="Osmani S.A."/>
            <person name="Pakula T."/>
            <person name="Paszewski A."/>
            <person name="Paulsen I."/>
            <person name="Pilsyk S."/>
            <person name="Pocsi I."/>
            <person name="Punt P.J."/>
            <person name="Ram A.F."/>
            <person name="Ren Q."/>
            <person name="Robellet X."/>
            <person name="Robson G."/>
            <person name="Seiboth B."/>
            <person name="van Solingen P."/>
            <person name="Specht T."/>
            <person name="Sun J."/>
            <person name="Taheri-Talesh N."/>
            <person name="Takeshita N."/>
            <person name="Ussery D."/>
            <person name="vanKuyk P.A."/>
            <person name="Visser H."/>
            <person name="van de Vondervoort P.J."/>
            <person name="de Vries R.P."/>
            <person name="Walton J."/>
            <person name="Xiang X."/>
            <person name="Xiong Y."/>
            <person name="Zeng A.P."/>
            <person name="Brandt B.W."/>
            <person name="Cornell M.J."/>
            <person name="van den Hondel C.A."/>
            <person name="Visser J."/>
            <person name="Oliver S.G."/>
            <person name="Turner G."/>
        </authorList>
    </citation>
    <scope>GENOME REANNOTATION</scope>
    <source>
        <strain>FGSC A4 / ATCC 38163 / CBS 112.46 / NRRL 194 / M139</strain>
    </source>
</reference>
<organism>
    <name type="scientific">Emericella nidulans (strain FGSC A4 / ATCC 38163 / CBS 112.46 / NRRL 194 / M139)</name>
    <name type="common">Aspergillus nidulans</name>
    <dbReference type="NCBI Taxonomy" id="227321"/>
    <lineage>
        <taxon>Eukaryota</taxon>
        <taxon>Fungi</taxon>
        <taxon>Dikarya</taxon>
        <taxon>Ascomycota</taxon>
        <taxon>Pezizomycotina</taxon>
        <taxon>Eurotiomycetes</taxon>
        <taxon>Eurotiomycetidae</taxon>
        <taxon>Eurotiales</taxon>
        <taxon>Aspergillaceae</taxon>
        <taxon>Aspergillus</taxon>
        <taxon>Aspergillus subgen. Nidulantes</taxon>
    </lineage>
</organism>
<name>GLNA_EMENI</name>
<feature type="chain" id="PRO_0000153156" description="Glutamine synthetase">
    <location>
        <begin position="1"/>
        <end position="357"/>
    </location>
</feature>
<feature type="domain" description="GS beta-grasp" evidence="2">
    <location>
        <begin position="25"/>
        <end position="104"/>
    </location>
</feature>
<feature type="domain" description="GS catalytic" evidence="3">
    <location>
        <begin position="111"/>
        <end position="357"/>
    </location>
</feature>
<feature type="sequence conflict" description="In Ref. 1; AAK70354." evidence="4" ref="1">
    <original>F</original>
    <variation>N</variation>
    <location>
        <position position="236"/>
    </location>
</feature>